<keyword id="KW-1015">Disulfide bond</keyword>
<keyword id="KW-0325">Glycoprotein</keyword>
<keyword id="KW-0378">Hydrolase</keyword>
<keyword id="KW-0458">Lysosome</keyword>
<keyword id="KW-0597">Phosphoprotein</keyword>
<keyword id="KW-0645">Protease</keyword>
<keyword id="KW-1185">Reference proteome</keyword>
<keyword id="KW-0732">Signal</keyword>
<keyword id="KW-0788">Thiol protease</keyword>
<keyword id="KW-0865">Zymogen</keyword>
<comment type="subcellular location">
    <subcellularLocation>
        <location>Lysosome</location>
    </subcellularLocation>
</comment>
<comment type="developmental stage">
    <text>Present in the vegetative phase and decreases with the start development, reappears in low levels when the fruiting body is formed.</text>
</comment>
<comment type="PTM">
    <text>Glycosylated; contains GlcNAc-alpha-1-P-Ser residues.</text>
</comment>
<comment type="similarity">
    <text evidence="3 4 5">Belongs to the peptidase C1 family.</text>
</comment>
<reference key="1">
    <citation type="journal article" date="1995" name="J. Biol. Chem.">
        <title>Identification of two novel Dictyostelium discoideum cysteine proteinases that carry N-acetylglucosamine-1-P-modification.</title>
        <authorList>
            <person name="Souza G.M."/>
            <person name="Hirai J."/>
            <person name="Mehta D.P."/>
            <person name="Freeze H.H."/>
        </authorList>
    </citation>
    <scope>NUCLEOTIDE SEQUENCE [MRNA]</scope>
    <source>
        <strain>AX4</strain>
    </source>
</reference>
<reference key="2">
    <citation type="journal article" date="2002" name="Nature">
        <title>Sequence and analysis of chromosome 2 of Dictyostelium discoideum.</title>
        <authorList>
            <person name="Gloeckner G."/>
            <person name="Eichinger L."/>
            <person name="Szafranski K."/>
            <person name="Pachebat J.A."/>
            <person name="Bankier A.T."/>
            <person name="Dear P.H."/>
            <person name="Lehmann R."/>
            <person name="Baumgart C."/>
            <person name="Parra G."/>
            <person name="Abril J.F."/>
            <person name="Guigo R."/>
            <person name="Kumpf K."/>
            <person name="Tunggal B."/>
            <person name="Cox E.C."/>
            <person name="Quail M.A."/>
            <person name="Platzer M."/>
            <person name="Rosenthal A."/>
            <person name="Noegel A.A."/>
        </authorList>
    </citation>
    <scope>NUCLEOTIDE SEQUENCE [LARGE SCALE GENOMIC DNA]</scope>
    <source>
        <strain>AX4</strain>
    </source>
</reference>
<reference key="3">
    <citation type="journal article" date="2005" name="Nature">
        <title>The genome of the social amoeba Dictyostelium discoideum.</title>
        <authorList>
            <person name="Eichinger L."/>
            <person name="Pachebat J.A."/>
            <person name="Gloeckner G."/>
            <person name="Rajandream M.A."/>
            <person name="Sucgang R."/>
            <person name="Berriman M."/>
            <person name="Song J."/>
            <person name="Olsen R."/>
            <person name="Szafranski K."/>
            <person name="Xu Q."/>
            <person name="Tunggal B."/>
            <person name="Kummerfeld S."/>
            <person name="Madera M."/>
            <person name="Konfortov B.A."/>
            <person name="Rivero F."/>
            <person name="Bankier A.T."/>
            <person name="Lehmann R."/>
            <person name="Hamlin N."/>
            <person name="Davies R."/>
            <person name="Gaudet P."/>
            <person name="Fey P."/>
            <person name="Pilcher K."/>
            <person name="Chen G."/>
            <person name="Saunders D."/>
            <person name="Sodergren E.J."/>
            <person name="Davis P."/>
            <person name="Kerhornou A."/>
            <person name="Nie X."/>
            <person name="Hall N."/>
            <person name="Anjard C."/>
            <person name="Hemphill L."/>
            <person name="Bason N."/>
            <person name="Farbrother P."/>
            <person name="Desany B."/>
            <person name="Just E."/>
            <person name="Morio T."/>
            <person name="Rost R."/>
            <person name="Churcher C.M."/>
            <person name="Cooper J."/>
            <person name="Haydock S."/>
            <person name="van Driessche N."/>
            <person name="Cronin A."/>
            <person name="Goodhead I."/>
            <person name="Muzny D.M."/>
            <person name="Mourier T."/>
            <person name="Pain A."/>
            <person name="Lu M."/>
            <person name="Harper D."/>
            <person name="Lindsay R."/>
            <person name="Hauser H."/>
            <person name="James K.D."/>
            <person name="Quiles M."/>
            <person name="Madan Babu M."/>
            <person name="Saito T."/>
            <person name="Buchrieser C."/>
            <person name="Wardroper A."/>
            <person name="Felder M."/>
            <person name="Thangavelu M."/>
            <person name="Johnson D."/>
            <person name="Knights A."/>
            <person name="Loulseged H."/>
            <person name="Mungall K.L."/>
            <person name="Oliver K."/>
            <person name="Price C."/>
            <person name="Quail M.A."/>
            <person name="Urushihara H."/>
            <person name="Hernandez J."/>
            <person name="Rabbinowitsch E."/>
            <person name="Steffen D."/>
            <person name="Sanders M."/>
            <person name="Ma J."/>
            <person name="Kohara Y."/>
            <person name="Sharp S."/>
            <person name="Simmonds M.N."/>
            <person name="Spiegler S."/>
            <person name="Tivey A."/>
            <person name="Sugano S."/>
            <person name="White B."/>
            <person name="Walker D."/>
            <person name="Woodward J.R."/>
            <person name="Winckler T."/>
            <person name="Tanaka Y."/>
            <person name="Shaulsky G."/>
            <person name="Schleicher M."/>
            <person name="Weinstock G.M."/>
            <person name="Rosenthal A."/>
            <person name="Cox E.C."/>
            <person name="Chisholm R.L."/>
            <person name="Gibbs R.A."/>
            <person name="Loomis W.F."/>
            <person name="Platzer M."/>
            <person name="Kay R.R."/>
            <person name="Williams J.G."/>
            <person name="Dear P.H."/>
            <person name="Noegel A.A."/>
            <person name="Barrell B.G."/>
            <person name="Kuspa A."/>
        </authorList>
    </citation>
    <scope>NUCLEOTIDE SEQUENCE [LARGE SCALE GENOMIC DNA]</scope>
    <source>
        <strain>AX4</strain>
    </source>
</reference>
<accession>P54640</accession>
<accession>Q558T9</accession>
<accession>Q8MNB1</accession>
<protein>
    <recommendedName>
        <fullName>Cysteine proteinase 5</fullName>
        <ecNumber>3.4.22.-</ecNumber>
    </recommendedName>
</protein>
<proteinExistence type="evidence at transcript level"/>
<gene>
    <name type="primary">cprE</name>
    <name type="synonym">CP5</name>
    <name type="ORF">DDB_G0272815</name>
</gene>
<name>CYSP5_DICDI</name>
<organism>
    <name type="scientific">Dictyostelium discoideum</name>
    <name type="common">Social amoeba</name>
    <dbReference type="NCBI Taxonomy" id="44689"/>
    <lineage>
        <taxon>Eukaryota</taxon>
        <taxon>Amoebozoa</taxon>
        <taxon>Evosea</taxon>
        <taxon>Eumycetozoa</taxon>
        <taxon>Dictyostelia</taxon>
        <taxon>Dictyosteliales</taxon>
        <taxon>Dictyosteliaceae</taxon>
        <taxon>Dictyostelium</taxon>
    </lineage>
</organism>
<sequence>MKVLSFLCVLLVSVATAKQQFSELQYRNAFTDWMITHQKSYTSEEFGARYNIFKANMDYVQQWNSKGSETVLGLNNFADITNEEYRNTYLGTKFDASSLIGTQEEKVFTTSSAASKDWRSEGAVTPVKNQGQCGGCWSFSTTGSTEGAHFQSKGELVSLSEQNLIDCSTENSGCDGGLMTYAFEYIINNNGIDTESSYPYKAENGKCEYKSENSGATLSSYKTVTAGSESSLESAVNVNPVSVAIDASHQSFQLYTSGIYYEPECSSENLDHGVLAVGYGSGSGSSSGQSSGQSSGNLSASSSNEYWIVKNSWGTSWGIEGYILMSRNRDNNCGIASSASFPVV</sequence>
<feature type="signal peptide" evidence="2">
    <location>
        <begin position="1"/>
        <end position="17"/>
    </location>
</feature>
<feature type="propeptide" id="PRO_0000026364" description="Activation peptide" evidence="2">
    <location>
        <begin position="18"/>
        <end position="111"/>
    </location>
</feature>
<feature type="chain" id="PRO_0000026365" description="Cysteine proteinase 5">
    <location>
        <begin position="112"/>
        <end position="344"/>
    </location>
</feature>
<feature type="active site" evidence="1">
    <location>
        <position position="136"/>
    </location>
</feature>
<feature type="active site" evidence="1">
    <location>
        <position position="272"/>
    </location>
</feature>
<feature type="active site" evidence="1">
    <location>
        <position position="311"/>
    </location>
</feature>
<feature type="glycosylation site" description="N-linked (GlcNAc...) asparagine" evidence="2">
    <location>
        <position position="297"/>
    </location>
</feature>
<feature type="disulfide bond" evidence="1">
    <location>
        <begin position="133"/>
        <end position="174"/>
    </location>
</feature>
<feature type="disulfide bond" evidence="1">
    <location>
        <begin position="167"/>
        <end position="207"/>
    </location>
</feature>
<feature type="disulfide bond" evidence="1">
    <location>
        <begin position="265"/>
        <end position="333"/>
    </location>
</feature>
<feature type="sequence conflict" description="In Ref. 1; AAA92018." evidence="6" ref="1">
    <original>K</original>
    <variation>T</variation>
    <location>
        <position position="54"/>
    </location>
</feature>
<feature type="sequence conflict" description="In Ref. 1; AAA92018." evidence="6" ref="1">
    <original>FTT</original>
    <variation>HTN</variation>
    <location>
        <begin position="108"/>
        <end position="110"/>
    </location>
</feature>
<evidence type="ECO:0000250" key="1"/>
<evidence type="ECO:0000255" key="2"/>
<evidence type="ECO:0000255" key="3">
    <source>
        <dbReference type="PROSITE-ProRule" id="PRU10088"/>
    </source>
</evidence>
<evidence type="ECO:0000255" key="4">
    <source>
        <dbReference type="PROSITE-ProRule" id="PRU10089"/>
    </source>
</evidence>
<evidence type="ECO:0000255" key="5">
    <source>
        <dbReference type="PROSITE-ProRule" id="PRU10090"/>
    </source>
</evidence>
<evidence type="ECO:0000305" key="6"/>
<dbReference type="EC" id="3.4.22.-"/>
<dbReference type="EMBL" id="L36205">
    <property type="protein sequence ID" value="AAA92018.1"/>
    <property type="molecule type" value="mRNA"/>
</dbReference>
<dbReference type="EMBL" id="AAFI02000008">
    <property type="protein sequence ID" value="EAL71045.1"/>
    <property type="molecule type" value="Genomic_DNA"/>
</dbReference>
<dbReference type="RefSeq" id="XP_644977.1">
    <property type="nucleotide sequence ID" value="XM_639885.1"/>
</dbReference>
<dbReference type="SMR" id="P54640"/>
<dbReference type="BioGRID" id="1243657">
    <property type="interactions" value="1"/>
</dbReference>
<dbReference type="FunCoup" id="P54640">
    <property type="interactions" value="75"/>
</dbReference>
<dbReference type="STRING" id="44689.P54640"/>
<dbReference type="MEROPS" id="C01.A57"/>
<dbReference type="MEROPS" id="I29.003"/>
<dbReference type="GlyCosmos" id="P54640">
    <property type="glycosylation" value="1 site, No reported glycans"/>
</dbReference>
<dbReference type="GlyGen" id="P54640">
    <property type="glycosylation" value="2 sites"/>
</dbReference>
<dbReference type="PaxDb" id="44689-DDB0185092"/>
<dbReference type="EnsemblProtists" id="EAL71045">
    <property type="protein sequence ID" value="EAL71045"/>
    <property type="gene ID" value="DDB_G0272815"/>
</dbReference>
<dbReference type="GeneID" id="8618654"/>
<dbReference type="KEGG" id="ddi:DDB_G0272815"/>
<dbReference type="dictyBase" id="DDB_G0272815">
    <property type="gene designation" value="cprE"/>
</dbReference>
<dbReference type="VEuPathDB" id="AmoebaDB:DDB_G0272815"/>
<dbReference type="eggNOG" id="KOG1543">
    <property type="taxonomic scope" value="Eukaryota"/>
</dbReference>
<dbReference type="HOGENOM" id="CLU_012184_1_2_1"/>
<dbReference type="InParanoid" id="P54640"/>
<dbReference type="OMA" id="GKCDASK"/>
<dbReference type="PhylomeDB" id="P54640"/>
<dbReference type="Reactome" id="R-DDI-1474228">
    <property type="pathway name" value="Degradation of the extracellular matrix"/>
</dbReference>
<dbReference type="Reactome" id="R-DDI-2132295">
    <property type="pathway name" value="MHC class II antigen presentation"/>
</dbReference>
<dbReference type="Reactome" id="R-DDI-6798695">
    <property type="pathway name" value="Neutrophil degranulation"/>
</dbReference>
<dbReference type="PRO" id="PR:P54640"/>
<dbReference type="Proteomes" id="UP000002195">
    <property type="component" value="Chromosome 2"/>
</dbReference>
<dbReference type="GO" id="GO:0005615">
    <property type="term" value="C:extracellular space"/>
    <property type="evidence" value="ECO:0000318"/>
    <property type="project" value="GO_Central"/>
</dbReference>
<dbReference type="GO" id="GO:0005764">
    <property type="term" value="C:lysosome"/>
    <property type="evidence" value="ECO:0000318"/>
    <property type="project" value="GO_Central"/>
</dbReference>
<dbReference type="GO" id="GO:0004197">
    <property type="term" value="F:cysteine-type endopeptidase activity"/>
    <property type="evidence" value="ECO:0000318"/>
    <property type="project" value="GO_Central"/>
</dbReference>
<dbReference type="GO" id="GO:0006955">
    <property type="term" value="P:immune response"/>
    <property type="evidence" value="ECO:0000318"/>
    <property type="project" value="GO_Central"/>
</dbReference>
<dbReference type="GO" id="GO:2001235">
    <property type="term" value="P:positive regulation of apoptotic signaling pathway"/>
    <property type="evidence" value="ECO:0000318"/>
    <property type="project" value="GO_Central"/>
</dbReference>
<dbReference type="GO" id="GO:0051603">
    <property type="term" value="P:proteolysis involved in protein catabolic process"/>
    <property type="evidence" value="ECO:0000318"/>
    <property type="project" value="GO_Central"/>
</dbReference>
<dbReference type="CDD" id="cd02248">
    <property type="entry name" value="Peptidase_C1A"/>
    <property type="match status" value="1"/>
</dbReference>
<dbReference type="FunFam" id="3.90.70.10:FF:000198">
    <property type="entry name" value="Cysteine proteinase 3"/>
    <property type="match status" value="1"/>
</dbReference>
<dbReference type="Gene3D" id="3.90.70.10">
    <property type="entry name" value="Cysteine proteinases"/>
    <property type="match status" value="1"/>
</dbReference>
<dbReference type="InterPro" id="IPR038765">
    <property type="entry name" value="Papain-like_cys_pep_sf"/>
</dbReference>
<dbReference type="InterPro" id="IPR025661">
    <property type="entry name" value="Pept_asp_AS"/>
</dbReference>
<dbReference type="InterPro" id="IPR000169">
    <property type="entry name" value="Pept_cys_AS"/>
</dbReference>
<dbReference type="InterPro" id="IPR025660">
    <property type="entry name" value="Pept_his_AS"/>
</dbReference>
<dbReference type="InterPro" id="IPR013128">
    <property type="entry name" value="Peptidase_C1A"/>
</dbReference>
<dbReference type="InterPro" id="IPR000668">
    <property type="entry name" value="Peptidase_C1A_C"/>
</dbReference>
<dbReference type="InterPro" id="IPR039417">
    <property type="entry name" value="Peptidase_C1A_papain-like"/>
</dbReference>
<dbReference type="InterPro" id="IPR013201">
    <property type="entry name" value="Prot_inhib_I29"/>
</dbReference>
<dbReference type="PANTHER" id="PTHR12411">
    <property type="entry name" value="CYSTEINE PROTEASE FAMILY C1-RELATED"/>
    <property type="match status" value="1"/>
</dbReference>
<dbReference type="Pfam" id="PF08246">
    <property type="entry name" value="Inhibitor_I29"/>
    <property type="match status" value="1"/>
</dbReference>
<dbReference type="Pfam" id="PF00112">
    <property type="entry name" value="Peptidase_C1"/>
    <property type="match status" value="1"/>
</dbReference>
<dbReference type="PRINTS" id="PR00705">
    <property type="entry name" value="PAPAIN"/>
</dbReference>
<dbReference type="SMART" id="SM00848">
    <property type="entry name" value="Inhibitor_I29"/>
    <property type="match status" value="1"/>
</dbReference>
<dbReference type="SMART" id="SM00645">
    <property type="entry name" value="Pept_C1"/>
    <property type="match status" value="1"/>
</dbReference>
<dbReference type="SUPFAM" id="SSF54001">
    <property type="entry name" value="Cysteine proteinases"/>
    <property type="match status" value="1"/>
</dbReference>
<dbReference type="PROSITE" id="PS00640">
    <property type="entry name" value="THIOL_PROTEASE_ASN"/>
    <property type="match status" value="1"/>
</dbReference>
<dbReference type="PROSITE" id="PS00139">
    <property type="entry name" value="THIOL_PROTEASE_CYS"/>
    <property type="match status" value="1"/>
</dbReference>
<dbReference type="PROSITE" id="PS00639">
    <property type="entry name" value="THIOL_PROTEASE_HIS"/>
    <property type="match status" value="1"/>
</dbReference>